<reference key="1">
    <citation type="submission" date="2006-08" db="EMBL/GenBank/DDBJ databases">
        <authorList>
            <consortium name="NIH - Mammalian Gene Collection (MGC) project"/>
        </authorList>
    </citation>
    <scope>NUCLEOTIDE SEQUENCE [LARGE SCALE MRNA]</scope>
    <source>
        <strain>Hereford</strain>
        <tissue>Fetal pons</tissue>
    </source>
</reference>
<accession>Q0VCJ7</accession>
<name>RERG_BOVIN</name>
<protein>
    <recommendedName>
        <fullName>Ras-related and estrogen-regulated growth inhibitor</fullName>
        <ecNumber evidence="2">3.6.5.2</ecNumber>
    </recommendedName>
</protein>
<evidence type="ECO:0000250" key="1"/>
<evidence type="ECO:0000250" key="2">
    <source>
        <dbReference type="UniProtKB" id="Q96A58"/>
    </source>
</evidence>
<evidence type="ECO:0000305" key="3"/>
<feature type="chain" id="PRO_0000281328" description="Ras-related and estrogen-regulated growth inhibitor">
    <location>
        <begin position="1"/>
        <end position="199"/>
    </location>
</feature>
<feature type="binding site" evidence="1">
    <location>
        <begin position="13"/>
        <end position="20"/>
    </location>
    <ligand>
        <name>GTP</name>
        <dbReference type="ChEBI" id="CHEBI:37565"/>
    </ligand>
</feature>
<feature type="binding site" evidence="1">
    <location>
        <begin position="60"/>
        <end position="64"/>
    </location>
    <ligand>
        <name>GTP</name>
        <dbReference type="ChEBI" id="CHEBI:37565"/>
    </ligand>
</feature>
<feature type="binding site" evidence="1">
    <location>
        <begin position="118"/>
        <end position="121"/>
    </location>
    <ligand>
        <name>GTP</name>
        <dbReference type="ChEBI" id="CHEBI:37565"/>
    </ligand>
</feature>
<organism>
    <name type="scientific">Bos taurus</name>
    <name type="common">Bovine</name>
    <dbReference type="NCBI Taxonomy" id="9913"/>
    <lineage>
        <taxon>Eukaryota</taxon>
        <taxon>Metazoa</taxon>
        <taxon>Chordata</taxon>
        <taxon>Craniata</taxon>
        <taxon>Vertebrata</taxon>
        <taxon>Euteleostomi</taxon>
        <taxon>Mammalia</taxon>
        <taxon>Eutheria</taxon>
        <taxon>Laurasiatheria</taxon>
        <taxon>Artiodactyla</taxon>
        <taxon>Ruminantia</taxon>
        <taxon>Pecora</taxon>
        <taxon>Bovidae</taxon>
        <taxon>Bovinae</taxon>
        <taxon>Bos</taxon>
    </lineage>
</organism>
<dbReference type="EC" id="3.6.5.2" evidence="2"/>
<dbReference type="EMBL" id="BC120134">
    <property type="protein sequence ID" value="AAI20135.1"/>
    <property type="molecule type" value="mRNA"/>
</dbReference>
<dbReference type="RefSeq" id="NP_001069666.1">
    <property type="nucleotide sequence ID" value="NM_001076198.2"/>
</dbReference>
<dbReference type="SMR" id="Q0VCJ7"/>
<dbReference type="FunCoup" id="Q0VCJ7">
    <property type="interactions" value="291"/>
</dbReference>
<dbReference type="STRING" id="9913.ENSBTAP00000002817"/>
<dbReference type="PaxDb" id="9913-ENSBTAP00000002817"/>
<dbReference type="Ensembl" id="ENSBTAT00000002817.6">
    <property type="protein sequence ID" value="ENSBTAP00000002817.4"/>
    <property type="gene ID" value="ENSBTAG00000002174.6"/>
</dbReference>
<dbReference type="GeneID" id="540025"/>
<dbReference type="KEGG" id="bta:540025"/>
<dbReference type="CTD" id="85004"/>
<dbReference type="VEuPathDB" id="HostDB:ENSBTAG00000002174"/>
<dbReference type="VGNC" id="VGNC:33873">
    <property type="gene designation" value="RERG"/>
</dbReference>
<dbReference type="eggNOG" id="KOG0395">
    <property type="taxonomic scope" value="Eukaryota"/>
</dbReference>
<dbReference type="GeneTree" id="ENSGT00940000159750"/>
<dbReference type="HOGENOM" id="CLU_041217_9_7_1"/>
<dbReference type="InParanoid" id="Q0VCJ7"/>
<dbReference type="OMA" id="KELCGEY"/>
<dbReference type="OrthoDB" id="18798at2759"/>
<dbReference type="TreeFam" id="TF318030"/>
<dbReference type="Proteomes" id="UP000009136">
    <property type="component" value="Chromosome 5"/>
</dbReference>
<dbReference type="Bgee" id="ENSBTAG00000002174">
    <property type="expression patterns" value="Expressed in caput epididymis and 100 other cell types or tissues"/>
</dbReference>
<dbReference type="GO" id="GO:0005829">
    <property type="term" value="C:cytosol"/>
    <property type="evidence" value="ECO:0007669"/>
    <property type="project" value="Ensembl"/>
</dbReference>
<dbReference type="GO" id="GO:0001650">
    <property type="term" value="C:fibrillar center"/>
    <property type="evidence" value="ECO:0007669"/>
    <property type="project" value="Ensembl"/>
</dbReference>
<dbReference type="GO" id="GO:0005654">
    <property type="term" value="C:nucleoplasm"/>
    <property type="evidence" value="ECO:0007669"/>
    <property type="project" value="Ensembl"/>
</dbReference>
<dbReference type="GO" id="GO:0005886">
    <property type="term" value="C:plasma membrane"/>
    <property type="evidence" value="ECO:0000318"/>
    <property type="project" value="GO_Central"/>
</dbReference>
<dbReference type="GO" id="GO:0003925">
    <property type="term" value="F:G protein activity"/>
    <property type="evidence" value="ECO:0007669"/>
    <property type="project" value="UniProtKB-EC"/>
</dbReference>
<dbReference type="GO" id="GO:0019003">
    <property type="term" value="F:GDP binding"/>
    <property type="evidence" value="ECO:0000318"/>
    <property type="project" value="GO_Central"/>
</dbReference>
<dbReference type="GO" id="GO:0005525">
    <property type="term" value="F:GTP binding"/>
    <property type="evidence" value="ECO:0000318"/>
    <property type="project" value="GO_Central"/>
</dbReference>
<dbReference type="GO" id="GO:0003924">
    <property type="term" value="F:GTPase activity"/>
    <property type="evidence" value="ECO:0000318"/>
    <property type="project" value="GO_Central"/>
</dbReference>
<dbReference type="GO" id="GO:0030308">
    <property type="term" value="P:negative regulation of cell growth"/>
    <property type="evidence" value="ECO:0007669"/>
    <property type="project" value="Ensembl"/>
</dbReference>
<dbReference type="GO" id="GO:0008285">
    <property type="term" value="P:negative regulation of cell population proliferation"/>
    <property type="evidence" value="ECO:0007669"/>
    <property type="project" value="Ensembl"/>
</dbReference>
<dbReference type="GO" id="GO:0009725">
    <property type="term" value="P:response to hormone"/>
    <property type="evidence" value="ECO:0007669"/>
    <property type="project" value="Ensembl"/>
</dbReference>
<dbReference type="CDD" id="cd04146">
    <property type="entry name" value="RERG_RasL11_like"/>
    <property type="match status" value="1"/>
</dbReference>
<dbReference type="FunFam" id="3.40.50.300:FF:000942">
    <property type="entry name" value="Ras-related and estrogen-regulated growth inhibitor"/>
    <property type="match status" value="1"/>
</dbReference>
<dbReference type="Gene3D" id="3.40.50.300">
    <property type="entry name" value="P-loop containing nucleotide triphosphate hydrolases"/>
    <property type="match status" value="1"/>
</dbReference>
<dbReference type="InterPro" id="IPR027417">
    <property type="entry name" value="P-loop_NTPase"/>
</dbReference>
<dbReference type="InterPro" id="IPR051065">
    <property type="entry name" value="Ras-related_GTPase"/>
</dbReference>
<dbReference type="InterPro" id="IPR005225">
    <property type="entry name" value="Small_GTP-bd"/>
</dbReference>
<dbReference type="InterPro" id="IPR001806">
    <property type="entry name" value="Small_GTPase"/>
</dbReference>
<dbReference type="NCBIfam" id="TIGR00231">
    <property type="entry name" value="small_GTP"/>
    <property type="match status" value="1"/>
</dbReference>
<dbReference type="PANTHER" id="PTHR45704">
    <property type="entry name" value="RAS-LIKE FAMILY MEMBER 11"/>
    <property type="match status" value="1"/>
</dbReference>
<dbReference type="Pfam" id="PF00071">
    <property type="entry name" value="Ras"/>
    <property type="match status" value="1"/>
</dbReference>
<dbReference type="PRINTS" id="PR00449">
    <property type="entry name" value="RASTRNSFRMNG"/>
</dbReference>
<dbReference type="SMART" id="SM00175">
    <property type="entry name" value="RAB"/>
    <property type="match status" value="1"/>
</dbReference>
<dbReference type="SMART" id="SM00173">
    <property type="entry name" value="RAS"/>
    <property type="match status" value="1"/>
</dbReference>
<dbReference type="SMART" id="SM00174">
    <property type="entry name" value="RHO"/>
    <property type="match status" value="1"/>
</dbReference>
<dbReference type="SUPFAM" id="SSF52540">
    <property type="entry name" value="P-loop containing nucleoside triphosphate hydrolases"/>
    <property type="match status" value="1"/>
</dbReference>
<dbReference type="PROSITE" id="PS51421">
    <property type="entry name" value="RAS"/>
    <property type="match status" value="1"/>
</dbReference>
<sequence length="199" mass="22622">MAKSAEVKLAIFGRAGVGKSALVVRFLTKRFIWEYDPTLESTYRHQATIDDEVVTMEILDTAGQEDTIQREGHMRWGEGFVLVYDITDRGSFEEVLPLKNILDEIKKPKNVTLILVGNKADLDHSRQVSTEEGEKLATELACAFYECSACTGEGNITEIFYELCREVRRRRMVQGKTRRRSSTTHVKQAINKMLTKISS</sequence>
<comment type="function">
    <text evidence="1">Binds GDP/GTP and possesses intrinsic GTPase activity. Has higher affinity for GDP than for GTP (By similarity).</text>
</comment>
<comment type="catalytic activity">
    <reaction evidence="2">
        <text>GTP + H2O = GDP + phosphate + H(+)</text>
        <dbReference type="Rhea" id="RHEA:19669"/>
        <dbReference type="ChEBI" id="CHEBI:15377"/>
        <dbReference type="ChEBI" id="CHEBI:15378"/>
        <dbReference type="ChEBI" id="CHEBI:37565"/>
        <dbReference type="ChEBI" id="CHEBI:43474"/>
        <dbReference type="ChEBI" id="CHEBI:58189"/>
        <dbReference type="EC" id="3.6.5.2"/>
    </reaction>
</comment>
<comment type="subcellular location">
    <subcellularLocation>
        <location evidence="1">Cytoplasm</location>
    </subcellularLocation>
</comment>
<comment type="similarity">
    <text evidence="3">Belongs to the small GTPase superfamily. Ras family.</text>
</comment>
<proteinExistence type="evidence at transcript level"/>
<gene>
    <name type="primary">RERG</name>
</gene>
<keyword id="KW-0963">Cytoplasm</keyword>
<keyword id="KW-0342">GTP-binding</keyword>
<keyword id="KW-0378">Hydrolase</keyword>
<keyword id="KW-0547">Nucleotide-binding</keyword>
<keyword id="KW-0656">Proto-oncogene</keyword>
<keyword id="KW-1185">Reference proteome</keyword>